<evidence type="ECO:0000250" key="1">
    <source>
        <dbReference type="UniProtKB" id="P48449"/>
    </source>
</evidence>
<evidence type="ECO:0000250" key="2">
    <source>
        <dbReference type="UniProtKB" id="P48450"/>
    </source>
</evidence>
<evidence type="ECO:0000255" key="3"/>
<evidence type="ECO:0000305" key="4"/>
<evidence type="ECO:0000312" key="5">
    <source>
        <dbReference type="EMBL" id="AAH29082.1"/>
    </source>
</evidence>
<name>LSS_MOUSE</name>
<comment type="function">
    <text evidence="1">Key enzyme in the cholesterol biosynthesis pathway. Catalyzes the cyclization of (S)-2,3 oxidosqualene to lanosterol, a reaction that forms the sterol nucleus. Through the production of lanosterol may regulate lens protein aggregation and increase transparency.</text>
</comment>
<comment type="catalytic activity">
    <reaction evidence="1">
        <text>(S)-2,3-epoxysqualene = lanosterol</text>
        <dbReference type="Rhea" id="RHEA:14621"/>
        <dbReference type="ChEBI" id="CHEBI:15441"/>
        <dbReference type="ChEBI" id="CHEBI:16521"/>
        <dbReference type="EC" id="5.4.99.7"/>
    </reaction>
</comment>
<comment type="pathway">
    <text>Terpene metabolism; lanosterol biosynthesis; lanosterol from farnesyl diphosphate: step 3/3.</text>
</comment>
<comment type="subunit">
    <text evidence="1">Monomer.</text>
</comment>
<comment type="subcellular location">
    <subcellularLocation>
        <location evidence="1">Endoplasmic reticulum membrane</location>
        <topology evidence="1">Peripheral membrane protein</topology>
    </subcellularLocation>
</comment>
<comment type="similarity">
    <text evidence="2">Belongs to the terpene cyclase/mutase family.</text>
</comment>
<keyword id="KW-0007">Acetylation</keyword>
<keyword id="KW-0256">Endoplasmic reticulum</keyword>
<keyword id="KW-0413">Isomerase</keyword>
<keyword id="KW-0444">Lipid biosynthesis</keyword>
<keyword id="KW-0443">Lipid metabolism</keyword>
<keyword id="KW-0472">Membrane</keyword>
<keyword id="KW-1185">Reference proteome</keyword>
<keyword id="KW-0677">Repeat</keyword>
<keyword id="KW-0752">Steroid biosynthesis</keyword>
<feature type="initiator methionine" description="Removed" evidence="1">
    <location>
        <position position="1"/>
    </location>
</feature>
<feature type="chain" id="PRO_0000072660" description="Lanosterol synthase">
    <location>
        <begin position="2"/>
        <end position="733"/>
    </location>
</feature>
<feature type="repeat" description="PFTB 1" evidence="3">
    <location>
        <begin position="125"/>
        <end position="166"/>
    </location>
</feature>
<feature type="repeat" description="PFTB 2" evidence="3">
    <location>
        <begin position="484"/>
        <end position="529"/>
    </location>
</feature>
<feature type="repeat" description="PFTB 3" evidence="3">
    <location>
        <begin position="561"/>
        <end position="601"/>
    </location>
</feature>
<feature type="repeat" description="PFTB 4" evidence="3">
    <location>
        <begin position="613"/>
        <end position="654"/>
    </location>
</feature>
<feature type="active site" description="Proton donor" evidence="1">
    <location>
        <position position="456"/>
    </location>
</feature>
<feature type="modified residue" description="N-acetylthreonine" evidence="1">
    <location>
        <position position="2"/>
    </location>
</feature>
<feature type="sequence conflict" description="In Ref. 1; BAC37102." evidence="4" ref="1">
    <original>V</original>
    <variation>A</variation>
    <location>
        <position position="297"/>
    </location>
</feature>
<feature type="sequence conflict" description="In Ref. 1; BAC31739." evidence="4" ref="1">
    <original>V</original>
    <variation>A</variation>
    <location>
        <position position="347"/>
    </location>
</feature>
<accession>Q8BLN5</accession>
<accession>Q8BVJ4</accession>
<accession>Q8K307</accession>
<proteinExistence type="evidence at protein level"/>
<dbReference type="EC" id="5.4.99.7" evidence="1"/>
<dbReference type="EMBL" id="AK044016">
    <property type="protein sequence ID" value="BAC31739.1"/>
    <property type="molecule type" value="mRNA"/>
</dbReference>
<dbReference type="EMBL" id="AK078023">
    <property type="protein sequence ID" value="BAC37102.1"/>
    <property type="molecule type" value="mRNA"/>
</dbReference>
<dbReference type="EMBL" id="BC029082">
    <property type="protein sequence ID" value="AAH29082.1"/>
    <property type="molecule type" value="mRNA"/>
</dbReference>
<dbReference type="CCDS" id="CCDS23948.1"/>
<dbReference type="RefSeq" id="NP_666118.1">
    <property type="nucleotide sequence ID" value="NM_146006.2"/>
</dbReference>
<dbReference type="SMR" id="Q8BLN5"/>
<dbReference type="BioGRID" id="201212">
    <property type="interactions" value="3"/>
</dbReference>
<dbReference type="FunCoup" id="Q8BLN5">
    <property type="interactions" value="545"/>
</dbReference>
<dbReference type="IntAct" id="Q8BLN5">
    <property type="interactions" value="1"/>
</dbReference>
<dbReference type="MINT" id="Q8BLN5"/>
<dbReference type="STRING" id="10090.ENSMUSP00000046856"/>
<dbReference type="GlyGen" id="Q8BLN5">
    <property type="glycosylation" value="1 site, 1 O-linked glycan (1 site)"/>
</dbReference>
<dbReference type="iPTMnet" id="Q8BLN5"/>
<dbReference type="PhosphoSitePlus" id="Q8BLN5"/>
<dbReference type="SwissPalm" id="Q8BLN5"/>
<dbReference type="jPOST" id="Q8BLN5"/>
<dbReference type="PaxDb" id="10090-ENSMUSP00000046856"/>
<dbReference type="PeptideAtlas" id="Q8BLN5"/>
<dbReference type="ProteomicsDB" id="275470"/>
<dbReference type="Pumba" id="Q8BLN5"/>
<dbReference type="Antibodypedia" id="24599">
    <property type="antibodies" value="159 antibodies from 28 providers"/>
</dbReference>
<dbReference type="DNASU" id="16987"/>
<dbReference type="Ensembl" id="ENSMUST00000048678.7">
    <property type="protein sequence ID" value="ENSMUSP00000046856.7"/>
    <property type="gene ID" value="ENSMUSG00000033105.13"/>
</dbReference>
<dbReference type="GeneID" id="16987"/>
<dbReference type="KEGG" id="mmu:16987"/>
<dbReference type="UCSC" id="uc007fuq.2">
    <property type="organism name" value="mouse"/>
</dbReference>
<dbReference type="AGR" id="MGI:1336155"/>
<dbReference type="CTD" id="4047"/>
<dbReference type="MGI" id="MGI:1336155">
    <property type="gene designation" value="Lss"/>
</dbReference>
<dbReference type="VEuPathDB" id="HostDB:ENSMUSG00000033105"/>
<dbReference type="eggNOG" id="KOG0497">
    <property type="taxonomic scope" value="Eukaryota"/>
</dbReference>
<dbReference type="GeneTree" id="ENSGT00390000011570"/>
<dbReference type="HOGENOM" id="CLU_009074_2_1_1"/>
<dbReference type="InParanoid" id="Q8BLN5"/>
<dbReference type="OMA" id="CWARQTI"/>
<dbReference type="OrthoDB" id="21502at2759"/>
<dbReference type="PhylomeDB" id="Q8BLN5"/>
<dbReference type="TreeFam" id="TF300406"/>
<dbReference type="Reactome" id="R-MMU-191273">
    <property type="pathway name" value="Cholesterol biosynthesis"/>
</dbReference>
<dbReference type="SABIO-RK" id="Q8BLN5"/>
<dbReference type="UniPathway" id="UPA00767">
    <property type="reaction ID" value="UER00753"/>
</dbReference>
<dbReference type="BioGRID-ORCS" id="16987">
    <property type="hits" value="4 hits in 63 CRISPR screens"/>
</dbReference>
<dbReference type="ChiTaRS" id="Lss">
    <property type="organism name" value="mouse"/>
</dbReference>
<dbReference type="PRO" id="PR:Q8BLN5"/>
<dbReference type="Proteomes" id="UP000000589">
    <property type="component" value="Chromosome 10"/>
</dbReference>
<dbReference type="RNAct" id="Q8BLN5">
    <property type="molecule type" value="protein"/>
</dbReference>
<dbReference type="Bgee" id="ENSMUSG00000033105">
    <property type="expression patterns" value="Expressed in embryonic brain and 288 other cell types or tissues"/>
</dbReference>
<dbReference type="ExpressionAtlas" id="Q8BLN5">
    <property type="expression patterns" value="baseline and differential"/>
</dbReference>
<dbReference type="GO" id="GO:0005789">
    <property type="term" value="C:endoplasmic reticulum membrane"/>
    <property type="evidence" value="ECO:0000250"/>
    <property type="project" value="UniProtKB"/>
</dbReference>
<dbReference type="GO" id="GO:0005811">
    <property type="term" value="C:lipid droplet"/>
    <property type="evidence" value="ECO:0007669"/>
    <property type="project" value="Ensembl"/>
</dbReference>
<dbReference type="GO" id="GO:0000250">
    <property type="term" value="F:lanosterol synthase activity"/>
    <property type="evidence" value="ECO:0000250"/>
    <property type="project" value="UniProtKB"/>
</dbReference>
<dbReference type="GO" id="GO:0006695">
    <property type="term" value="P:cholesterol biosynthetic process"/>
    <property type="evidence" value="ECO:0007669"/>
    <property type="project" value="Ensembl"/>
</dbReference>
<dbReference type="GO" id="GO:0031647">
    <property type="term" value="P:regulation of protein stability"/>
    <property type="evidence" value="ECO:0007669"/>
    <property type="project" value="Ensembl"/>
</dbReference>
<dbReference type="GO" id="GO:0006694">
    <property type="term" value="P:steroid biosynthetic process"/>
    <property type="evidence" value="ECO:0000250"/>
    <property type="project" value="UniProtKB"/>
</dbReference>
<dbReference type="GO" id="GO:0016104">
    <property type="term" value="P:triterpenoid biosynthetic process"/>
    <property type="evidence" value="ECO:0007669"/>
    <property type="project" value="InterPro"/>
</dbReference>
<dbReference type="CDD" id="cd02892">
    <property type="entry name" value="SQCY_1"/>
    <property type="match status" value="1"/>
</dbReference>
<dbReference type="FunFam" id="1.50.10.20:FF:000002">
    <property type="entry name" value="Terpene cyclase/mutase family member"/>
    <property type="match status" value="1"/>
</dbReference>
<dbReference type="FunFam" id="1.50.10.20:FF:000003">
    <property type="entry name" value="Terpene cyclase/mutase family member"/>
    <property type="match status" value="1"/>
</dbReference>
<dbReference type="Gene3D" id="1.50.10.20">
    <property type="match status" value="2"/>
</dbReference>
<dbReference type="Gene3D" id="6.20.120.20">
    <property type="match status" value="1"/>
</dbReference>
<dbReference type="InterPro" id="IPR032696">
    <property type="entry name" value="SQ_cyclase_C"/>
</dbReference>
<dbReference type="InterPro" id="IPR032697">
    <property type="entry name" value="SQ_cyclase_N"/>
</dbReference>
<dbReference type="InterPro" id="IPR018333">
    <property type="entry name" value="Squalene_cyclase"/>
</dbReference>
<dbReference type="InterPro" id="IPR002365">
    <property type="entry name" value="Terpene_synthase_CS"/>
</dbReference>
<dbReference type="InterPro" id="IPR008930">
    <property type="entry name" value="Terpenoid_cyclase/PrenylTrfase"/>
</dbReference>
<dbReference type="NCBIfam" id="TIGR01787">
    <property type="entry name" value="squalene_cyclas"/>
    <property type="match status" value="1"/>
</dbReference>
<dbReference type="PANTHER" id="PTHR11764:SF20">
    <property type="entry name" value="LANOSTEROL SYNTHASE"/>
    <property type="match status" value="1"/>
</dbReference>
<dbReference type="PANTHER" id="PTHR11764">
    <property type="entry name" value="TERPENE CYCLASE/MUTASE FAMILY MEMBER"/>
    <property type="match status" value="1"/>
</dbReference>
<dbReference type="Pfam" id="PF13243">
    <property type="entry name" value="SQHop_cyclase_C"/>
    <property type="match status" value="1"/>
</dbReference>
<dbReference type="Pfam" id="PF13249">
    <property type="entry name" value="SQHop_cyclase_N"/>
    <property type="match status" value="1"/>
</dbReference>
<dbReference type="SFLD" id="SFLDG01016">
    <property type="entry name" value="Prenyltransferase_Like_2"/>
    <property type="match status" value="1"/>
</dbReference>
<dbReference type="SUPFAM" id="SSF48239">
    <property type="entry name" value="Terpenoid cyclases/Protein prenyltransferases"/>
    <property type="match status" value="2"/>
</dbReference>
<dbReference type="PROSITE" id="PS01074">
    <property type="entry name" value="TERPENE_SYNTHASES"/>
    <property type="match status" value="1"/>
</dbReference>
<gene>
    <name evidence="5" type="primary">Lss</name>
</gene>
<sequence>MTEGTCLRRRGGPYKTEPATDLTRWRLQNELGRQRWTYYQAEDDPGREQTGLEAHSLGLDTRSYFTDLPKAQTAHEGALNGVTFYAKLQAEDGHWAGDYGGPLFLLPGLLITCHISHISLPAGYREEMVRYLRSVQLPDGGWGLHIEDKSTVFGTALNYVALRILGIGPDDPDLVRARNVLHKKGGAVAIPSWGKFWLAVLNVYSWEGLNTLFPEMWLFPEWVPAHPSTLWCHCRQVYLPMSYCYATRLSASEDPLVQSLRQELYVQDYASIDWPAQRNNVSPDEMYTPHSWLLHVVYGLLNLYERFHSTSLRKWAVQMLYEHIAADDCFTKCISIGPISKTINMLVRWSVDGPSSPAFQEHVSRIKDYLWLGLDGMKMQGTNGSQIWDTSFAIQALLEAGAHHRPEFLPCLQKAHEFLRLSQVPENCPDYQKYYRHMRKGGFSFSTLDCGWIVADCTAEGLKAVLLLQNQCPSITEHIPRERLCDAVDVLLSLRNADGGFATYEKKRGGYLLELLNPSEVFGDIMIDYTYVECTSAVMQALKHFHEHFPDYRAAEVRETLNQGLDFCRRKQRADGSWEGSWGVCFTYGTWFGLEAFACMGHTYQDGAACAEVAQACNFLLSQQMADGGWGEDFESCEQRRYVQSARSQVHSTCWALMGLMAVRHPDITAQERGIRCLLGKQLPNGDWPQENISGVFNKSCAISYTSYRNIFPIWALGRFSNLYPDNTLAGHI</sequence>
<protein>
    <recommendedName>
        <fullName>Lanosterol synthase</fullName>
        <ecNumber evidence="1">5.4.99.7</ecNumber>
    </recommendedName>
    <alternativeName>
        <fullName>2,3-epoxysqualene--lanosterol cyclase</fullName>
    </alternativeName>
    <alternativeName>
        <fullName>Oxidosqualene--lanosterol cyclase</fullName>
        <shortName>OSC</shortName>
    </alternativeName>
</protein>
<organism>
    <name type="scientific">Mus musculus</name>
    <name type="common">Mouse</name>
    <dbReference type="NCBI Taxonomy" id="10090"/>
    <lineage>
        <taxon>Eukaryota</taxon>
        <taxon>Metazoa</taxon>
        <taxon>Chordata</taxon>
        <taxon>Craniata</taxon>
        <taxon>Vertebrata</taxon>
        <taxon>Euteleostomi</taxon>
        <taxon>Mammalia</taxon>
        <taxon>Eutheria</taxon>
        <taxon>Euarchontoglires</taxon>
        <taxon>Glires</taxon>
        <taxon>Rodentia</taxon>
        <taxon>Myomorpha</taxon>
        <taxon>Muroidea</taxon>
        <taxon>Muridae</taxon>
        <taxon>Murinae</taxon>
        <taxon>Mus</taxon>
        <taxon>Mus</taxon>
    </lineage>
</organism>
<reference key="1">
    <citation type="journal article" date="2005" name="Science">
        <title>The transcriptional landscape of the mammalian genome.</title>
        <authorList>
            <person name="Carninci P."/>
            <person name="Kasukawa T."/>
            <person name="Katayama S."/>
            <person name="Gough J."/>
            <person name="Frith M.C."/>
            <person name="Maeda N."/>
            <person name="Oyama R."/>
            <person name="Ravasi T."/>
            <person name="Lenhard B."/>
            <person name="Wells C."/>
            <person name="Kodzius R."/>
            <person name="Shimokawa K."/>
            <person name="Bajic V.B."/>
            <person name="Brenner S.E."/>
            <person name="Batalov S."/>
            <person name="Forrest A.R."/>
            <person name="Zavolan M."/>
            <person name="Davis M.J."/>
            <person name="Wilming L.G."/>
            <person name="Aidinis V."/>
            <person name="Allen J.E."/>
            <person name="Ambesi-Impiombato A."/>
            <person name="Apweiler R."/>
            <person name="Aturaliya R.N."/>
            <person name="Bailey T.L."/>
            <person name="Bansal M."/>
            <person name="Baxter L."/>
            <person name="Beisel K.W."/>
            <person name="Bersano T."/>
            <person name="Bono H."/>
            <person name="Chalk A.M."/>
            <person name="Chiu K.P."/>
            <person name="Choudhary V."/>
            <person name="Christoffels A."/>
            <person name="Clutterbuck D.R."/>
            <person name="Crowe M.L."/>
            <person name="Dalla E."/>
            <person name="Dalrymple B.P."/>
            <person name="de Bono B."/>
            <person name="Della Gatta G."/>
            <person name="di Bernardo D."/>
            <person name="Down T."/>
            <person name="Engstrom P."/>
            <person name="Fagiolini M."/>
            <person name="Faulkner G."/>
            <person name="Fletcher C.F."/>
            <person name="Fukushima T."/>
            <person name="Furuno M."/>
            <person name="Futaki S."/>
            <person name="Gariboldi M."/>
            <person name="Georgii-Hemming P."/>
            <person name="Gingeras T.R."/>
            <person name="Gojobori T."/>
            <person name="Green R.E."/>
            <person name="Gustincich S."/>
            <person name="Harbers M."/>
            <person name="Hayashi Y."/>
            <person name="Hensch T.K."/>
            <person name="Hirokawa N."/>
            <person name="Hill D."/>
            <person name="Huminiecki L."/>
            <person name="Iacono M."/>
            <person name="Ikeo K."/>
            <person name="Iwama A."/>
            <person name="Ishikawa T."/>
            <person name="Jakt M."/>
            <person name="Kanapin A."/>
            <person name="Katoh M."/>
            <person name="Kawasawa Y."/>
            <person name="Kelso J."/>
            <person name="Kitamura H."/>
            <person name="Kitano H."/>
            <person name="Kollias G."/>
            <person name="Krishnan S.P."/>
            <person name="Kruger A."/>
            <person name="Kummerfeld S.K."/>
            <person name="Kurochkin I.V."/>
            <person name="Lareau L.F."/>
            <person name="Lazarevic D."/>
            <person name="Lipovich L."/>
            <person name="Liu J."/>
            <person name="Liuni S."/>
            <person name="McWilliam S."/>
            <person name="Madan Babu M."/>
            <person name="Madera M."/>
            <person name="Marchionni L."/>
            <person name="Matsuda H."/>
            <person name="Matsuzawa S."/>
            <person name="Miki H."/>
            <person name="Mignone F."/>
            <person name="Miyake S."/>
            <person name="Morris K."/>
            <person name="Mottagui-Tabar S."/>
            <person name="Mulder N."/>
            <person name="Nakano N."/>
            <person name="Nakauchi H."/>
            <person name="Ng P."/>
            <person name="Nilsson R."/>
            <person name="Nishiguchi S."/>
            <person name="Nishikawa S."/>
            <person name="Nori F."/>
            <person name="Ohara O."/>
            <person name="Okazaki Y."/>
            <person name="Orlando V."/>
            <person name="Pang K.C."/>
            <person name="Pavan W.J."/>
            <person name="Pavesi G."/>
            <person name="Pesole G."/>
            <person name="Petrovsky N."/>
            <person name="Piazza S."/>
            <person name="Reed J."/>
            <person name="Reid J.F."/>
            <person name="Ring B.Z."/>
            <person name="Ringwald M."/>
            <person name="Rost B."/>
            <person name="Ruan Y."/>
            <person name="Salzberg S.L."/>
            <person name="Sandelin A."/>
            <person name="Schneider C."/>
            <person name="Schoenbach C."/>
            <person name="Sekiguchi K."/>
            <person name="Semple C.A."/>
            <person name="Seno S."/>
            <person name="Sessa L."/>
            <person name="Sheng Y."/>
            <person name="Shibata Y."/>
            <person name="Shimada H."/>
            <person name="Shimada K."/>
            <person name="Silva D."/>
            <person name="Sinclair B."/>
            <person name="Sperling S."/>
            <person name="Stupka E."/>
            <person name="Sugiura K."/>
            <person name="Sultana R."/>
            <person name="Takenaka Y."/>
            <person name="Taki K."/>
            <person name="Tammoja K."/>
            <person name="Tan S.L."/>
            <person name="Tang S."/>
            <person name="Taylor M.S."/>
            <person name="Tegner J."/>
            <person name="Teichmann S.A."/>
            <person name="Ueda H.R."/>
            <person name="van Nimwegen E."/>
            <person name="Verardo R."/>
            <person name="Wei C.L."/>
            <person name="Yagi K."/>
            <person name="Yamanishi H."/>
            <person name="Zabarovsky E."/>
            <person name="Zhu S."/>
            <person name="Zimmer A."/>
            <person name="Hide W."/>
            <person name="Bult C."/>
            <person name="Grimmond S.M."/>
            <person name="Teasdale R.D."/>
            <person name="Liu E.T."/>
            <person name="Brusic V."/>
            <person name="Quackenbush J."/>
            <person name="Wahlestedt C."/>
            <person name="Mattick J.S."/>
            <person name="Hume D.A."/>
            <person name="Kai C."/>
            <person name="Sasaki D."/>
            <person name="Tomaru Y."/>
            <person name="Fukuda S."/>
            <person name="Kanamori-Katayama M."/>
            <person name="Suzuki M."/>
            <person name="Aoki J."/>
            <person name="Arakawa T."/>
            <person name="Iida J."/>
            <person name="Imamura K."/>
            <person name="Itoh M."/>
            <person name="Kato T."/>
            <person name="Kawaji H."/>
            <person name="Kawagashira N."/>
            <person name="Kawashima T."/>
            <person name="Kojima M."/>
            <person name="Kondo S."/>
            <person name="Konno H."/>
            <person name="Nakano K."/>
            <person name="Ninomiya N."/>
            <person name="Nishio T."/>
            <person name="Okada M."/>
            <person name="Plessy C."/>
            <person name="Shibata K."/>
            <person name="Shiraki T."/>
            <person name="Suzuki S."/>
            <person name="Tagami M."/>
            <person name="Waki K."/>
            <person name="Watahiki A."/>
            <person name="Okamura-Oho Y."/>
            <person name="Suzuki H."/>
            <person name="Kawai J."/>
            <person name="Hayashizaki Y."/>
        </authorList>
    </citation>
    <scope>NUCLEOTIDE SEQUENCE [LARGE SCALE MRNA]</scope>
    <source>
        <strain>C57BL/6J</strain>
        <tissue>Brain cortex</tissue>
        <tissue>Head</tissue>
    </source>
</reference>
<reference evidence="5" key="2">
    <citation type="journal article" date="2004" name="Genome Res.">
        <title>The status, quality, and expansion of the NIH full-length cDNA project: the Mammalian Gene Collection (MGC).</title>
        <authorList>
            <consortium name="The MGC Project Team"/>
        </authorList>
    </citation>
    <scope>NUCLEOTIDE SEQUENCE [LARGE SCALE MRNA]</scope>
    <source>
        <tissue evidence="5">Mammary tumor</tissue>
    </source>
</reference>
<reference key="3">
    <citation type="journal article" date="2010" name="Cell">
        <title>A tissue-specific atlas of mouse protein phosphorylation and expression.</title>
        <authorList>
            <person name="Huttlin E.L."/>
            <person name="Jedrychowski M.P."/>
            <person name="Elias J.E."/>
            <person name="Goswami T."/>
            <person name="Rad R."/>
            <person name="Beausoleil S.A."/>
            <person name="Villen J."/>
            <person name="Haas W."/>
            <person name="Sowa M.E."/>
            <person name="Gygi S.P."/>
        </authorList>
    </citation>
    <scope>IDENTIFICATION BY MASS SPECTROMETRY [LARGE SCALE ANALYSIS]</scope>
    <source>
        <tissue>Brain</tissue>
        <tissue>Liver</tissue>
        <tissue>Lung</tissue>
        <tissue>Pancreas</tissue>
        <tissue>Testis</tissue>
    </source>
</reference>